<organism>
    <name type="scientific">Lactococcus lactis subsp. lactis (strain IL1403)</name>
    <name type="common">Streptococcus lactis</name>
    <dbReference type="NCBI Taxonomy" id="272623"/>
    <lineage>
        <taxon>Bacteria</taxon>
        <taxon>Bacillati</taxon>
        <taxon>Bacillota</taxon>
        <taxon>Bacilli</taxon>
        <taxon>Lactobacillales</taxon>
        <taxon>Streptococcaceae</taxon>
        <taxon>Lactococcus</taxon>
    </lineage>
</organism>
<keyword id="KW-0067">ATP-binding</keyword>
<keyword id="KW-0460">Magnesium</keyword>
<keyword id="KW-0547">Nucleotide-binding</keyword>
<keyword id="KW-1185">Reference proteome</keyword>
<keyword id="KW-0808">Transferase</keyword>
<keyword id="KW-0819">tRNA processing</keyword>
<evidence type="ECO:0000255" key="1">
    <source>
        <dbReference type="HAMAP-Rule" id="MF_00185"/>
    </source>
</evidence>
<protein>
    <recommendedName>
        <fullName evidence="1">tRNA dimethylallyltransferase</fullName>
        <ecNumber evidence="1">2.5.1.75</ecNumber>
    </recommendedName>
    <alternativeName>
        <fullName evidence="1">Dimethylallyl diphosphate:tRNA dimethylallyltransferase</fullName>
        <shortName evidence="1">DMAPP:tRNA dimethylallyltransferase</shortName>
        <shortName evidence="1">DMATase</shortName>
    </alternativeName>
    <alternativeName>
        <fullName evidence="1">Isopentenyl-diphosphate:tRNA isopentenyltransferase</fullName>
        <shortName evidence="1">IPP transferase</shortName>
        <shortName evidence="1">IPPT</shortName>
        <shortName evidence="1">IPTase</shortName>
    </alternativeName>
</protein>
<sequence>MKNNKVLVVVGPTAVGKTALGIDLAIKFNGEIISGDSQQVYQGLDIGTAKVTMAEQAQVPHHLIDVRKWTENFSVHDFVIEANQLIKEILDQGKVPIIVGGTGLYIQSLIEGYHLGGQENHEEMMKLREELSLLSDEELFAKVIKINPDISELNRRRAIRFLELQTFGSQDENLGSDYDFLLIGLNADRKVLYDRINQRVDQMMREGLLDEARTLYEQAPEVQAAKGIGYKEFFPYFSGDISLEEAVELVKRNSRRYAKRQLTWFKNRMSVEFEDVFSKNYPEPIFDKVTQFLN</sequence>
<comment type="function">
    <text evidence="1">Catalyzes the transfer of a dimethylallyl group onto the adenine at position 37 in tRNAs that read codons beginning with uridine, leading to the formation of N6-(dimethylallyl)adenosine (i(6)A).</text>
</comment>
<comment type="catalytic activity">
    <reaction evidence="1">
        <text>adenosine(37) in tRNA + dimethylallyl diphosphate = N(6)-dimethylallyladenosine(37) in tRNA + diphosphate</text>
        <dbReference type="Rhea" id="RHEA:26482"/>
        <dbReference type="Rhea" id="RHEA-COMP:10162"/>
        <dbReference type="Rhea" id="RHEA-COMP:10375"/>
        <dbReference type="ChEBI" id="CHEBI:33019"/>
        <dbReference type="ChEBI" id="CHEBI:57623"/>
        <dbReference type="ChEBI" id="CHEBI:74411"/>
        <dbReference type="ChEBI" id="CHEBI:74415"/>
        <dbReference type="EC" id="2.5.1.75"/>
    </reaction>
</comment>
<comment type="cofactor">
    <cofactor evidence="1">
        <name>Mg(2+)</name>
        <dbReference type="ChEBI" id="CHEBI:18420"/>
    </cofactor>
</comment>
<comment type="subunit">
    <text evidence="1">Monomer.</text>
</comment>
<comment type="similarity">
    <text evidence="1">Belongs to the IPP transferase family.</text>
</comment>
<accession>Q9CHU2</accession>
<feature type="chain" id="PRO_0000163929" description="tRNA dimethylallyltransferase">
    <location>
        <begin position="1"/>
        <end position="294"/>
    </location>
</feature>
<feature type="region of interest" description="Interaction with substrate tRNA" evidence="1">
    <location>
        <begin position="36"/>
        <end position="39"/>
    </location>
</feature>
<feature type="binding site" evidence="1">
    <location>
        <begin position="11"/>
        <end position="18"/>
    </location>
    <ligand>
        <name>ATP</name>
        <dbReference type="ChEBI" id="CHEBI:30616"/>
    </ligand>
</feature>
<feature type="binding site" evidence="1">
    <location>
        <begin position="13"/>
        <end position="18"/>
    </location>
    <ligand>
        <name>substrate</name>
    </ligand>
</feature>
<feature type="site" description="Interaction with substrate tRNA" evidence="1">
    <location>
        <position position="102"/>
    </location>
</feature>
<gene>
    <name evidence="1" type="primary">miaA</name>
    <name type="ordered locus">LL0626</name>
    <name type="ORF">L15012</name>
</gene>
<name>MIAA_LACLA</name>
<dbReference type="EC" id="2.5.1.75" evidence="1"/>
<dbReference type="EMBL" id="AE005176">
    <property type="protein sequence ID" value="AAK04724.1"/>
    <property type="molecule type" value="Genomic_DNA"/>
</dbReference>
<dbReference type="PIR" id="B86703">
    <property type="entry name" value="B86703"/>
</dbReference>
<dbReference type="RefSeq" id="NP_266782.1">
    <property type="nucleotide sequence ID" value="NC_002662.1"/>
</dbReference>
<dbReference type="RefSeq" id="WP_003129541.1">
    <property type="nucleotide sequence ID" value="NC_002662.1"/>
</dbReference>
<dbReference type="SMR" id="Q9CHU2"/>
<dbReference type="PaxDb" id="272623-L15012"/>
<dbReference type="EnsemblBacteria" id="AAK04724">
    <property type="protein sequence ID" value="AAK04724"/>
    <property type="gene ID" value="L15012"/>
</dbReference>
<dbReference type="KEGG" id="lla:L15012"/>
<dbReference type="PATRIC" id="fig|272623.7.peg.670"/>
<dbReference type="eggNOG" id="COG0324">
    <property type="taxonomic scope" value="Bacteria"/>
</dbReference>
<dbReference type="HOGENOM" id="CLU_032616_0_1_9"/>
<dbReference type="OrthoDB" id="9776390at2"/>
<dbReference type="Proteomes" id="UP000002196">
    <property type="component" value="Chromosome"/>
</dbReference>
<dbReference type="GO" id="GO:0005524">
    <property type="term" value="F:ATP binding"/>
    <property type="evidence" value="ECO:0007669"/>
    <property type="project" value="UniProtKB-UniRule"/>
</dbReference>
<dbReference type="GO" id="GO:0052381">
    <property type="term" value="F:tRNA dimethylallyltransferase activity"/>
    <property type="evidence" value="ECO:0007669"/>
    <property type="project" value="UniProtKB-UniRule"/>
</dbReference>
<dbReference type="GO" id="GO:0006400">
    <property type="term" value="P:tRNA modification"/>
    <property type="evidence" value="ECO:0007669"/>
    <property type="project" value="TreeGrafter"/>
</dbReference>
<dbReference type="Gene3D" id="3.40.50.300">
    <property type="entry name" value="P-loop containing nucleotide triphosphate hydrolases"/>
    <property type="match status" value="1"/>
</dbReference>
<dbReference type="HAMAP" id="MF_00185">
    <property type="entry name" value="IPP_trans"/>
    <property type="match status" value="1"/>
</dbReference>
<dbReference type="InterPro" id="IPR039657">
    <property type="entry name" value="Dimethylallyltransferase"/>
</dbReference>
<dbReference type="InterPro" id="IPR018022">
    <property type="entry name" value="IPT"/>
</dbReference>
<dbReference type="InterPro" id="IPR027417">
    <property type="entry name" value="P-loop_NTPase"/>
</dbReference>
<dbReference type="NCBIfam" id="TIGR00174">
    <property type="entry name" value="miaA"/>
    <property type="match status" value="1"/>
</dbReference>
<dbReference type="PANTHER" id="PTHR11088">
    <property type="entry name" value="TRNA DIMETHYLALLYLTRANSFERASE"/>
    <property type="match status" value="1"/>
</dbReference>
<dbReference type="PANTHER" id="PTHR11088:SF60">
    <property type="entry name" value="TRNA DIMETHYLALLYLTRANSFERASE"/>
    <property type="match status" value="1"/>
</dbReference>
<dbReference type="Pfam" id="PF01715">
    <property type="entry name" value="IPPT"/>
    <property type="match status" value="1"/>
</dbReference>
<dbReference type="SUPFAM" id="SSF52540">
    <property type="entry name" value="P-loop containing nucleoside triphosphate hydrolases"/>
    <property type="match status" value="2"/>
</dbReference>
<reference key="1">
    <citation type="journal article" date="2001" name="Genome Res.">
        <title>The complete genome sequence of the lactic acid bacterium Lactococcus lactis ssp. lactis IL1403.</title>
        <authorList>
            <person name="Bolotin A."/>
            <person name="Wincker P."/>
            <person name="Mauger S."/>
            <person name="Jaillon O."/>
            <person name="Malarme K."/>
            <person name="Weissenbach J."/>
            <person name="Ehrlich S.D."/>
            <person name="Sorokin A."/>
        </authorList>
    </citation>
    <scope>NUCLEOTIDE SEQUENCE [LARGE SCALE GENOMIC DNA]</scope>
    <source>
        <strain>IL1403</strain>
    </source>
</reference>
<proteinExistence type="inferred from homology"/>